<gene>
    <name evidence="1" type="primary">rph</name>
    <name type="ordered locus">HD_0301</name>
</gene>
<reference key="1">
    <citation type="submission" date="2003-06" db="EMBL/GenBank/DDBJ databases">
        <title>The complete genome sequence of Haemophilus ducreyi.</title>
        <authorList>
            <person name="Munson R.S. Jr."/>
            <person name="Ray W.C."/>
            <person name="Mahairas G."/>
            <person name="Sabo P."/>
            <person name="Mungur R."/>
            <person name="Johnson L."/>
            <person name="Nguyen D."/>
            <person name="Wang J."/>
            <person name="Forst C."/>
            <person name="Hood L."/>
        </authorList>
    </citation>
    <scope>NUCLEOTIDE SEQUENCE [LARGE SCALE GENOMIC DNA]</scope>
    <source>
        <strain>35000HP / ATCC 700724</strain>
    </source>
</reference>
<feature type="chain" id="PRO_0000139896" description="Ribonuclease PH">
    <location>
        <begin position="1"/>
        <end position="238"/>
    </location>
</feature>
<feature type="binding site" evidence="1">
    <location>
        <position position="86"/>
    </location>
    <ligand>
        <name>phosphate</name>
        <dbReference type="ChEBI" id="CHEBI:43474"/>
        <note>substrate</note>
    </ligand>
</feature>
<feature type="binding site" evidence="1">
    <location>
        <begin position="124"/>
        <end position="126"/>
    </location>
    <ligand>
        <name>phosphate</name>
        <dbReference type="ChEBI" id="CHEBI:43474"/>
        <note>substrate</note>
    </ligand>
</feature>
<sequence length="238" mass="26190">MRPNHRENNQIRPVKITRHYTRYAEGSVLIEFGETKVLCNASIEESVPRFLKGQQQGWVTAEYGMLPRATHSRNQREAAKGKQSGRTMEIQRLIARALRAVVDLEALGERTITIDCDVIQADGGTRTAAITGACVALQDAIHKLIADGVLKTNPLKGLVAAISVGIVENEAVCDLEYVEDAKAETDMNVVMVEDGRLVEVQGTAEGKPFSHMELLQLLDLADQGINQLFEVQRQALAE</sequence>
<name>RNPH_HAEDU</name>
<proteinExistence type="inferred from homology"/>
<accession>Q7VP10</accession>
<keyword id="KW-0548">Nucleotidyltransferase</keyword>
<keyword id="KW-1185">Reference proteome</keyword>
<keyword id="KW-0694">RNA-binding</keyword>
<keyword id="KW-0698">rRNA processing</keyword>
<keyword id="KW-0808">Transferase</keyword>
<keyword id="KW-0819">tRNA processing</keyword>
<keyword id="KW-0820">tRNA-binding</keyword>
<protein>
    <recommendedName>
        <fullName evidence="1">Ribonuclease PH</fullName>
        <shortName evidence="1">RNase PH</shortName>
        <ecNumber evidence="1">2.7.7.56</ecNumber>
    </recommendedName>
    <alternativeName>
        <fullName evidence="1">tRNA nucleotidyltransferase</fullName>
    </alternativeName>
</protein>
<organism>
    <name type="scientific">Haemophilus ducreyi (strain 35000HP / ATCC 700724)</name>
    <dbReference type="NCBI Taxonomy" id="233412"/>
    <lineage>
        <taxon>Bacteria</taxon>
        <taxon>Pseudomonadati</taxon>
        <taxon>Pseudomonadota</taxon>
        <taxon>Gammaproteobacteria</taxon>
        <taxon>Pasteurellales</taxon>
        <taxon>Pasteurellaceae</taxon>
        <taxon>Haemophilus</taxon>
    </lineage>
</organism>
<comment type="function">
    <text evidence="1">Phosphorolytic 3'-5' exoribonuclease that plays an important role in tRNA 3'-end maturation. Removes nucleotide residues following the 3'-CCA terminus of tRNAs; can also add nucleotides to the ends of RNA molecules by using nucleoside diphosphates as substrates, but this may not be physiologically important. Probably plays a role in initiation of 16S rRNA degradation (leading to ribosome degradation) during starvation.</text>
</comment>
<comment type="catalytic activity">
    <reaction evidence="1">
        <text>tRNA(n+1) + phosphate = tRNA(n) + a ribonucleoside 5'-diphosphate</text>
        <dbReference type="Rhea" id="RHEA:10628"/>
        <dbReference type="Rhea" id="RHEA-COMP:17343"/>
        <dbReference type="Rhea" id="RHEA-COMP:17344"/>
        <dbReference type="ChEBI" id="CHEBI:43474"/>
        <dbReference type="ChEBI" id="CHEBI:57930"/>
        <dbReference type="ChEBI" id="CHEBI:173114"/>
        <dbReference type="EC" id="2.7.7.56"/>
    </reaction>
</comment>
<comment type="subunit">
    <text evidence="1">Homohexameric ring arranged as a trimer of dimers.</text>
</comment>
<comment type="similarity">
    <text evidence="1">Belongs to the RNase PH family.</text>
</comment>
<dbReference type="EC" id="2.7.7.56" evidence="1"/>
<dbReference type="EMBL" id="AE017143">
    <property type="protein sequence ID" value="AAP95280.1"/>
    <property type="molecule type" value="Genomic_DNA"/>
</dbReference>
<dbReference type="RefSeq" id="WP_010944333.1">
    <property type="nucleotide sequence ID" value="NC_002940.2"/>
</dbReference>
<dbReference type="SMR" id="Q7VP10"/>
<dbReference type="STRING" id="233412.HD_0301"/>
<dbReference type="KEGG" id="hdu:HD_0301"/>
<dbReference type="eggNOG" id="COG0689">
    <property type="taxonomic scope" value="Bacteria"/>
</dbReference>
<dbReference type="HOGENOM" id="CLU_050858_0_0_6"/>
<dbReference type="OrthoDB" id="9802265at2"/>
<dbReference type="Proteomes" id="UP000001022">
    <property type="component" value="Chromosome"/>
</dbReference>
<dbReference type="GO" id="GO:0000175">
    <property type="term" value="F:3'-5'-RNA exonuclease activity"/>
    <property type="evidence" value="ECO:0007669"/>
    <property type="project" value="UniProtKB-UniRule"/>
</dbReference>
<dbReference type="GO" id="GO:0000049">
    <property type="term" value="F:tRNA binding"/>
    <property type="evidence" value="ECO:0007669"/>
    <property type="project" value="UniProtKB-UniRule"/>
</dbReference>
<dbReference type="GO" id="GO:0009022">
    <property type="term" value="F:tRNA nucleotidyltransferase activity"/>
    <property type="evidence" value="ECO:0007669"/>
    <property type="project" value="UniProtKB-UniRule"/>
</dbReference>
<dbReference type="GO" id="GO:0016075">
    <property type="term" value="P:rRNA catabolic process"/>
    <property type="evidence" value="ECO:0007669"/>
    <property type="project" value="UniProtKB-UniRule"/>
</dbReference>
<dbReference type="GO" id="GO:0006364">
    <property type="term" value="P:rRNA processing"/>
    <property type="evidence" value="ECO:0007669"/>
    <property type="project" value="UniProtKB-KW"/>
</dbReference>
<dbReference type="GO" id="GO:0008033">
    <property type="term" value="P:tRNA processing"/>
    <property type="evidence" value="ECO:0007669"/>
    <property type="project" value="UniProtKB-UniRule"/>
</dbReference>
<dbReference type="CDD" id="cd11362">
    <property type="entry name" value="RNase_PH_bact"/>
    <property type="match status" value="1"/>
</dbReference>
<dbReference type="FunFam" id="3.30.230.70:FF:000003">
    <property type="entry name" value="Ribonuclease PH"/>
    <property type="match status" value="1"/>
</dbReference>
<dbReference type="Gene3D" id="3.30.230.70">
    <property type="entry name" value="GHMP Kinase, N-terminal domain"/>
    <property type="match status" value="1"/>
</dbReference>
<dbReference type="HAMAP" id="MF_00564">
    <property type="entry name" value="RNase_PH"/>
    <property type="match status" value="1"/>
</dbReference>
<dbReference type="InterPro" id="IPR001247">
    <property type="entry name" value="ExoRNase_PH_dom1"/>
</dbReference>
<dbReference type="InterPro" id="IPR015847">
    <property type="entry name" value="ExoRNase_PH_dom2"/>
</dbReference>
<dbReference type="InterPro" id="IPR036345">
    <property type="entry name" value="ExoRNase_PH_dom2_sf"/>
</dbReference>
<dbReference type="InterPro" id="IPR027408">
    <property type="entry name" value="PNPase/RNase_PH_dom_sf"/>
</dbReference>
<dbReference type="InterPro" id="IPR020568">
    <property type="entry name" value="Ribosomal_Su5_D2-typ_SF"/>
</dbReference>
<dbReference type="InterPro" id="IPR050080">
    <property type="entry name" value="RNase_PH"/>
</dbReference>
<dbReference type="InterPro" id="IPR002381">
    <property type="entry name" value="RNase_PH_bac-type"/>
</dbReference>
<dbReference type="InterPro" id="IPR018336">
    <property type="entry name" value="RNase_PH_CS"/>
</dbReference>
<dbReference type="NCBIfam" id="TIGR01966">
    <property type="entry name" value="RNasePH"/>
    <property type="match status" value="1"/>
</dbReference>
<dbReference type="PANTHER" id="PTHR11953">
    <property type="entry name" value="EXOSOME COMPLEX COMPONENT"/>
    <property type="match status" value="1"/>
</dbReference>
<dbReference type="PANTHER" id="PTHR11953:SF0">
    <property type="entry name" value="EXOSOME COMPLEX COMPONENT RRP41"/>
    <property type="match status" value="1"/>
</dbReference>
<dbReference type="Pfam" id="PF01138">
    <property type="entry name" value="RNase_PH"/>
    <property type="match status" value="1"/>
</dbReference>
<dbReference type="Pfam" id="PF03725">
    <property type="entry name" value="RNase_PH_C"/>
    <property type="match status" value="1"/>
</dbReference>
<dbReference type="SUPFAM" id="SSF55666">
    <property type="entry name" value="Ribonuclease PH domain 2-like"/>
    <property type="match status" value="1"/>
</dbReference>
<dbReference type="SUPFAM" id="SSF54211">
    <property type="entry name" value="Ribosomal protein S5 domain 2-like"/>
    <property type="match status" value="1"/>
</dbReference>
<dbReference type="PROSITE" id="PS01277">
    <property type="entry name" value="RIBONUCLEASE_PH"/>
    <property type="match status" value="1"/>
</dbReference>
<evidence type="ECO:0000255" key="1">
    <source>
        <dbReference type="HAMAP-Rule" id="MF_00564"/>
    </source>
</evidence>